<protein>
    <recommendedName>
        <fullName>DNA polymerase IV 2</fullName>
        <shortName>Pol IV 2</shortName>
        <ecNumber>2.7.7.7</ecNumber>
    </recommendedName>
</protein>
<evidence type="ECO:0000250" key="1"/>
<evidence type="ECO:0000305" key="2"/>
<comment type="function">
    <text evidence="1">Poorly processive, error-prone DNA polymerase involved in untargeted mutagenesis. Copies undamaged DNA at stalled replication forks, which arise in vivo from mismatched or misaligned primer ends. These misaligned primers can be extended by PolIV. Exhibits no 3'-5' exonuclease (proofreading) activity. May be involved in translesional synthesis, in conjunction with the beta clamp from PolIII (By similarity).</text>
</comment>
<comment type="catalytic activity">
    <reaction>
        <text>DNA(n) + a 2'-deoxyribonucleoside 5'-triphosphate = DNA(n+1) + diphosphate</text>
        <dbReference type="Rhea" id="RHEA:22508"/>
        <dbReference type="Rhea" id="RHEA-COMP:17339"/>
        <dbReference type="Rhea" id="RHEA-COMP:17340"/>
        <dbReference type="ChEBI" id="CHEBI:33019"/>
        <dbReference type="ChEBI" id="CHEBI:61560"/>
        <dbReference type="ChEBI" id="CHEBI:173112"/>
        <dbReference type="EC" id="2.7.7.7"/>
    </reaction>
</comment>
<comment type="cofactor">
    <cofactor evidence="1">
        <name>Mg(2+)</name>
        <dbReference type="ChEBI" id="CHEBI:18420"/>
    </cofactor>
    <text evidence="1">Binds 2 magnesium ions per subunit.</text>
</comment>
<comment type="subunit">
    <text evidence="1">Monomer.</text>
</comment>
<comment type="subcellular location">
    <subcellularLocation>
        <location evidence="1">Cytoplasm</location>
    </subcellularLocation>
</comment>
<comment type="similarity">
    <text evidence="2">Belongs to the DNA polymerase type-Y family.</text>
</comment>
<keyword id="KW-0963">Cytoplasm</keyword>
<keyword id="KW-0227">DNA damage</keyword>
<keyword id="KW-0234">DNA repair</keyword>
<keyword id="KW-0235">DNA replication</keyword>
<keyword id="KW-0238">DNA-binding</keyword>
<keyword id="KW-0239">DNA-directed DNA polymerase</keyword>
<keyword id="KW-0460">Magnesium</keyword>
<keyword id="KW-0479">Metal-binding</keyword>
<keyword id="KW-0515">Mutator protein</keyword>
<keyword id="KW-0548">Nucleotidyltransferase</keyword>
<keyword id="KW-1185">Reference proteome</keyword>
<keyword id="KW-0808">Transferase</keyword>
<reference key="1">
    <citation type="journal article" date="2000" name="Nucleic Acids Res.">
        <title>Complete genome sequence of the alkaliphilic bacterium Bacillus halodurans and genomic sequence comparison with Bacillus subtilis.</title>
        <authorList>
            <person name="Takami H."/>
            <person name="Nakasone K."/>
            <person name="Takaki Y."/>
            <person name="Maeno G."/>
            <person name="Sasaki R."/>
            <person name="Masui N."/>
            <person name="Fuji F."/>
            <person name="Hirama C."/>
            <person name="Nakamura Y."/>
            <person name="Ogasawara N."/>
            <person name="Kuhara S."/>
            <person name="Horikoshi K."/>
        </authorList>
    </citation>
    <scope>NUCLEOTIDE SEQUENCE [LARGE SCALE GENOMIC DNA]</scope>
    <source>
        <strain>ATCC BAA-125 / DSM 18197 / FERM 7344 / JCM 9153 / C-125</strain>
    </source>
</reference>
<accession>Q9K9A8</accession>
<name>DPO42_HALH5</name>
<feature type="chain" id="PRO_0000173903" description="DNA polymerase IV 2">
    <location>
        <begin position="1"/>
        <end position="409"/>
    </location>
</feature>
<feature type="domain" description="UmuC">
    <location>
        <begin position="5"/>
        <end position="190"/>
    </location>
</feature>
<feature type="active site" evidence="1">
    <location>
        <position position="106"/>
    </location>
</feature>
<feature type="binding site" evidence="1">
    <location>
        <position position="9"/>
    </location>
    <ligand>
        <name>Mg(2+)</name>
        <dbReference type="ChEBI" id="CHEBI:18420"/>
    </ligand>
</feature>
<feature type="binding site" evidence="1">
    <location>
        <position position="105"/>
    </location>
    <ligand>
        <name>Mg(2+)</name>
        <dbReference type="ChEBI" id="CHEBI:18420"/>
    </ligand>
</feature>
<feature type="site" description="Substrate discrimination" evidence="1">
    <location>
        <position position="14"/>
    </location>
</feature>
<sequence>MDKVIFMVDMESFFASVERANHPELSGRPLLVSGDPERRSGVILAACPVAKARGVTNGERLWEAQQKCPEAVVVRPHMQQYVTVSVQITEILERFTDLIEPFSIDEQFMDVTHSQRLFGAPREIAQKVQQAIWHETGVRARIGMGESKVLAKMACDNFAKKMPSGVFHLTKERMERLLWPLPIECLYGVGRQMTKYFRNQGIRTIGQLANTSLERIKGKWGVNGHVLWLTAHGIDPSPVTPHSHDKQKGIGHGMTLPHDYVKAEDIHVVLLELCEEVCKRARRAHLMGRTVAIGVSGANMETPTGFHRQMKLTNHTNITMEVYEGAATLFERFWDGKPIRRLHVNLSNLTSDEAWQLSFFGNRDRAHQLGYTMDTIKEKFGDTAIRRAVSFLSASQAEERAKKIGGHYK</sequence>
<proteinExistence type="inferred from homology"/>
<dbReference type="EC" id="2.7.7.7"/>
<dbReference type="EMBL" id="BA000004">
    <property type="protein sequence ID" value="BAB06460.1"/>
    <property type="molecule type" value="Genomic_DNA"/>
</dbReference>
<dbReference type="PIR" id="E83992">
    <property type="entry name" value="E83992"/>
</dbReference>
<dbReference type="RefSeq" id="WP_010898889.1">
    <property type="nucleotide sequence ID" value="NC_002570.2"/>
</dbReference>
<dbReference type="SMR" id="Q9K9A8"/>
<dbReference type="STRING" id="272558.gene:10728640"/>
<dbReference type="KEGG" id="bha:BH2741"/>
<dbReference type="eggNOG" id="COG0389">
    <property type="taxonomic scope" value="Bacteria"/>
</dbReference>
<dbReference type="HOGENOM" id="CLU_012348_5_0_9"/>
<dbReference type="OrthoDB" id="9808813at2"/>
<dbReference type="Proteomes" id="UP000001258">
    <property type="component" value="Chromosome"/>
</dbReference>
<dbReference type="GO" id="GO:0005829">
    <property type="term" value="C:cytosol"/>
    <property type="evidence" value="ECO:0007669"/>
    <property type="project" value="TreeGrafter"/>
</dbReference>
<dbReference type="GO" id="GO:0003684">
    <property type="term" value="F:damaged DNA binding"/>
    <property type="evidence" value="ECO:0007669"/>
    <property type="project" value="InterPro"/>
</dbReference>
<dbReference type="GO" id="GO:0003887">
    <property type="term" value="F:DNA-directed DNA polymerase activity"/>
    <property type="evidence" value="ECO:0007669"/>
    <property type="project" value="UniProtKB-UniRule"/>
</dbReference>
<dbReference type="GO" id="GO:0000287">
    <property type="term" value="F:magnesium ion binding"/>
    <property type="evidence" value="ECO:0007669"/>
    <property type="project" value="UniProtKB-UniRule"/>
</dbReference>
<dbReference type="GO" id="GO:0006261">
    <property type="term" value="P:DNA-templated DNA replication"/>
    <property type="evidence" value="ECO:0007669"/>
    <property type="project" value="UniProtKB-UniRule"/>
</dbReference>
<dbReference type="GO" id="GO:0042276">
    <property type="term" value="P:error-prone translesion synthesis"/>
    <property type="evidence" value="ECO:0007669"/>
    <property type="project" value="TreeGrafter"/>
</dbReference>
<dbReference type="GO" id="GO:0009432">
    <property type="term" value="P:SOS response"/>
    <property type="evidence" value="ECO:0007669"/>
    <property type="project" value="TreeGrafter"/>
</dbReference>
<dbReference type="CDD" id="cd01700">
    <property type="entry name" value="PolY_Pol_V_umuC"/>
    <property type="match status" value="1"/>
</dbReference>
<dbReference type="Gene3D" id="3.30.70.270">
    <property type="match status" value="1"/>
</dbReference>
<dbReference type="Gene3D" id="3.40.1170.60">
    <property type="match status" value="1"/>
</dbReference>
<dbReference type="Gene3D" id="1.10.150.20">
    <property type="entry name" value="5' to 3' exonuclease, C-terminal subdomain"/>
    <property type="match status" value="1"/>
</dbReference>
<dbReference type="Gene3D" id="3.30.1490.100">
    <property type="entry name" value="DNA polymerase, Y-family, little finger domain"/>
    <property type="match status" value="1"/>
</dbReference>
<dbReference type="HAMAP" id="MF_01113">
    <property type="entry name" value="DNApol_IV"/>
    <property type="match status" value="1"/>
</dbReference>
<dbReference type="InterPro" id="IPR043502">
    <property type="entry name" value="DNA/RNA_pol_sf"/>
</dbReference>
<dbReference type="InterPro" id="IPR036775">
    <property type="entry name" value="DNA_pol_Y-fam_lit_finger_sf"/>
</dbReference>
<dbReference type="InterPro" id="IPR017961">
    <property type="entry name" value="DNA_pol_Y-fam_little_finger"/>
</dbReference>
<dbReference type="InterPro" id="IPR050116">
    <property type="entry name" value="DNA_polymerase-Y"/>
</dbReference>
<dbReference type="InterPro" id="IPR022880">
    <property type="entry name" value="DNApol_IV"/>
</dbReference>
<dbReference type="InterPro" id="IPR043128">
    <property type="entry name" value="Rev_trsase/Diguanyl_cyclase"/>
</dbReference>
<dbReference type="InterPro" id="IPR001126">
    <property type="entry name" value="UmuC"/>
</dbReference>
<dbReference type="NCBIfam" id="NF002848">
    <property type="entry name" value="PRK03103.1"/>
    <property type="match status" value="1"/>
</dbReference>
<dbReference type="PANTHER" id="PTHR11076">
    <property type="entry name" value="DNA REPAIR POLYMERASE UMUC / TRANSFERASE FAMILY MEMBER"/>
    <property type="match status" value="1"/>
</dbReference>
<dbReference type="PANTHER" id="PTHR11076:SF35">
    <property type="entry name" value="DNA REPAIR PROTEIN HOMOLOG YOBH"/>
    <property type="match status" value="1"/>
</dbReference>
<dbReference type="Pfam" id="PF00817">
    <property type="entry name" value="IMS"/>
    <property type="match status" value="1"/>
</dbReference>
<dbReference type="Pfam" id="PF11799">
    <property type="entry name" value="IMS_C"/>
    <property type="match status" value="1"/>
</dbReference>
<dbReference type="SUPFAM" id="SSF56672">
    <property type="entry name" value="DNA/RNA polymerases"/>
    <property type="match status" value="1"/>
</dbReference>
<dbReference type="SUPFAM" id="SSF100879">
    <property type="entry name" value="Lesion bypass DNA polymerase (Y-family), little finger domain"/>
    <property type="match status" value="1"/>
</dbReference>
<dbReference type="PROSITE" id="PS50173">
    <property type="entry name" value="UMUC"/>
    <property type="match status" value="1"/>
</dbReference>
<gene>
    <name type="primary">dinB2</name>
    <name type="ordered locus">BH2741</name>
</gene>
<organism>
    <name type="scientific">Halalkalibacterium halodurans (strain ATCC BAA-125 / DSM 18197 / FERM 7344 / JCM 9153 / C-125)</name>
    <name type="common">Bacillus halodurans</name>
    <dbReference type="NCBI Taxonomy" id="272558"/>
    <lineage>
        <taxon>Bacteria</taxon>
        <taxon>Bacillati</taxon>
        <taxon>Bacillota</taxon>
        <taxon>Bacilli</taxon>
        <taxon>Bacillales</taxon>
        <taxon>Bacillaceae</taxon>
        <taxon>Halalkalibacterium (ex Joshi et al. 2022)</taxon>
    </lineage>
</organism>